<reference key="1">
    <citation type="journal article" date="2004" name="Acta Chiropt.">
        <title>Phylogeny of African myotis bats (Chiroptera, Vespertilionidae) inferred from cytochrome b sequences.</title>
        <authorList>
            <person name="Stadelmann B."/>
            <person name="Jacobs D.S."/>
            <person name="Schoeman C."/>
            <person name="Ruedi M."/>
        </authorList>
    </citation>
    <scope>NUCLEOTIDE SEQUENCE [GENOMIC DNA]</scope>
    <source>
        <tissue>Wing</tissue>
    </source>
</reference>
<proteinExistence type="inferred from homology"/>
<organism>
    <name type="scientific">Myotis annectans</name>
    <name type="common">Hairy-faced bat</name>
    <name type="synonym">Pipistrellus annectans</name>
    <dbReference type="NCBI Taxonomy" id="265733"/>
    <lineage>
        <taxon>Eukaryota</taxon>
        <taxon>Metazoa</taxon>
        <taxon>Chordata</taxon>
        <taxon>Craniata</taxon>
        <taxon>Vertebrata</taxon>
        <taxon>Euteleostomi</taxon>
        <taxon>Mammalia</taxon>
        <taxon>Eutheria</taxon>
        <taxon>Laurasiatheria</taxon>
        <taxon>Chiroptera</taxon>
        <taxon>Yangochiroptera</taxon>
        <taxon>Vespertilionidae</taxon>
        <taxon>Myotis</taxon>
    </lineage>
</organism>
<gene>
    <name type="primary">MT-CYB</name>
    <name type="synonym">COB</name>
    <name type="synonym">CYTB</name>
    <name type="synonym">MTCYB</name>
</gene>
<geneLocation type="mitochondrion"/>
<comment type="function">
    <text evidence="2">Component of the ubiquinol-cytochrome c reductase complex (complex III or cytochrome b-c1 complex) that is part of the mitochondrial respiratory chain. The b-c1 complex mediates electron transfer from ubiquinol to cytochrome c. Contributes to the generation of a proton gradient across the mitochondrial membrane that is then used for ATP synthesis.</text>
</comment>
<comment type="cofactor">
    <cofactor evidence="2">
        <name>heme b</name>
        <dbReference type="ChEBI" id="CHEBI:60344"/>
    </cofactor>
    <text evidence="2">Binds 2 heme b groups non-covalently.</text>
</comment>
<comment type="subunit">
    <text evidence="2">The cytochrome bc1 complex contains 11 subunits: 3 respiratory subunits (MT-CYB, CYC1 and UQCRFS1), 2 core proteins (UQCRC1 and UQCRC2) and 6 low-molecular weight proteins (UQCRH/QCR6, UQCRB/QCR7, UQCRQ/QCR8, UQCR10/QCR9, UQCR11/QCR10 and a cleavage product of UQCRFS1). This cytochrome bc1 complex then forms a dimer.</text>
</comment>
<comment type="subcellular location">
    <subcellularLocation>
        <location evidence="2">Mitochondrion inner membrane</location>
        <topology evidence="2">Multi-pass membrane protein</topology>
    </subcellularLocation>
</comment>
<comment type="miscellaneous">
    <text evidence="1">Heme 1 (or BL or b562) is low-potential and absorbs at about 562 nm, and heme 2 (or BH or b566) is high-potential and absorbs at about 566 nm.</text>
</comment>
<comment type="similarity">
    <text evidence="3 4">Belongs to the cytochrome b family.</text>
</comment>
<comment type="caution">
    <text evidence="2">The full-length protein contains only eight transmembrane helices, not nine as predicted by bioinformatics tools.</text>
</comment>
<sequence length="379" mass="43137">MTNIRKSHPLMKIINNSFIDLPAPSNISSWWNFGSLLGVCLMLQILTGLFLAMHYTSDTMTAFNSVTHICRDVSYGWTLRYLHANGASMFFICLYLHVGRGIYYGSYTYSETWNIGIILLFTVMATAFMGYVLPWGQMSFWGATVITNLLSAIPYIGTNLVEWIWGGFSVDKATLTRFFAFHFLFPFIISAMVMVHLLFLHETGSNNPMGIPSNVDMIPFHPYYTIKDILGVLLMIMVLSTLVLFSPDMLGDPDNYIPANPLNTPPHIKPEWYFLFAYAILRSIPNKLGGVLALTLSILILVIIPMLHMSKQRSMIFRPLSQCLFWLLVADLLILTWIGGQPVEHPYIIIGQLASILYFSIIIILMPLINFMENYLLKW</sequence>
<name>CYB_MYOAN</name>
<keyword id="KW-0249">Electron transport</keyword>
<keyword id="KW-0349">Heme</keyword>
<keyword id="KW-0408">Iron</keyword>
<keyword id="KW-0472">Membrane</keyword>
<keyword id="KW-0479">Metal-binding</keyword>
<keyword id="KW-0496">Mitochondrion</keyword>
<keyword id="KW-0999">Mitochondrion inner membrane</keyword>
<keyword id="KW-0679">Respiratory chain</keyword>
<keyword id="KW-0812">Transmembrane</keyword>
<keyword id="KW-1133">Transmembrane helix</keyword>
<keyword id="KW-0813">Transport</keyword>
<keyword id="KW-0830">Ubiquinone</keyword>
<evidence type="ECO:0000250" key="1"/>
<evidence type="ECO:0000250" key="2">
    <source>
        <dbReference type="UniProtKB" id="P00157"/>
    </source>
</evidence>
<evidence type="ECO:0000255" key="3">
    <source>
        <dbReference type="PROSITE-ProRule" id="PRU00967"/>
    </source>
</evidence>
<evidence type="ECO:0000255" key="4">
    <source>
        <dbReference type="PROSITE-ProRule" id="PRU00968"/>
    </source>
</evidence>
<feature type="chain" id="PRO_0000254719" description="Cytochrome b">
    <location>
        <begin position="1"/>
        <end position="379"/>
    </location>
</feature>
<feature type="transmembrane region" description="Helical" evidence="2">
    <location>
        <begin position="33"/>
        <end position="53"/>
    </location>
</feature>
<feature type="transmembrane region" description="Helical" evidence="2">
    <location>
        <begin position="77"/>
        <end position="98"/>
    </location>
</feature>
<feature type="transmembrane region" description="Helical" evidence="2">
    <location>
        <begin position="113"/>
        <end position="133"/>
    </location>
</feature>
<feature type="transmembrane region" description="Helical" evidence="2">
    <location>
        <begin position="178"/>
        <end position="198"/>
    </location>
</feature>
<feature type="transmembrane region" description="Helical" evidence="2">
    <location>
        <begin position="226"/>
        <end position="246"/>
    </location>
</feature>
<feature type="transmembrane region" description="Helical" evidence="2">
    <location>
        <begin position="288"/>
        <end position="308"/>
    </location>
</feature>
<feature type="transmembrane region" description="Helical" evidence="2">
    <location>
        <begin position="320"/>
        <end position="340"/>
    </location>
</feature>
<feature type="transmembrane region" description="Helical" evidence="2">
    <location>
        <begin position="347"/>
        <end position="367"/>
    </location>
</feature>
<feature type="binding site" description="axial binding residue" evidence="2">
    <location>
        <position position="83"/>
    </location>
    <ligand>
        <name>heme b</name>
        <dbReference type="ChEBI" id="CHEBI:60344"/>
        <label>b562</label>
    </ligand>
    <ligandPart>
        <name>Fe</name>
        <dbReference type="ChEBI" id="CHEBI:18248"/>
    </ligandPart>
</feature>
<feature type="binding site" description="axial binding residue" evidence="2">
    <location>
        <position position="97"/>
    </location>
    <ligand>
        <name>heme b</name>
        <dbReference type="ChEBI" id="CHEBI:60344"/>
        <label>b566</label>
    </ligand>
    <ligandPart>
        <name>Fe</name>
        <dbReference type="ChEBI" id="CHEBI:18248"/>
    </ligandPart>
</feature>
<feature type="binding site" description="axial binding residue" evidence="2">
    <location>
        <position position="182"/>
    </location>
    <ligand>
        <name>heme b</name>
        <dbReference type="ChEBI" id="CHEBI:60344"/>
        <label>b562</label>
    </ligand>
    <ligandPart>
        <name>Fe</name>
        <dbReference type="ChEBI" id="CHEBI:18248"/>
    </ligandPart>
</feature>
<feature type="binding site" description="axial binding residue" evidence="2">
    <location>
        <position position="196"/>
    </location>
    <ligand>
        <name>heme b</name>
        <dbReference type="ChEBI" id="CHEBI:60344"/>
        <label>b566</label>
    </ligand>
    <ligandPart>
        <name>Fe</name>
        <dbReference type="ChEBI" id="CHEBI:18248"/>
    </ligandPart>
</feature>
<feature type="binding site" evidence="2">
    <location>
        <position position="201"/>
    </location>
    <ligand>
        <name>a ubiquinone</name>
        <dbReference type="ChEBI" id="CHEBI:16389"/>
    </ligand>
</feature>
<accession>Q5F4G2</accession>
<protein>
    <recommendedName>
        <fullName>Cytochrome b</fullName>
    </recommendedName>
    <alternativeName>
        <fullName>Complex III subunit 3</fullName>
    </alternativeName>
    <alternativeName>
        <fullName>Complex III subunit III</fullName>
    </alternativeName>
    <alternativeName>
        <fullName>Cytochrome b-c1 complex subunit 3</fullName>
    </alternativeName>
    <alternativeName>
        <fullName>Ubiquinol-cytochrome-c reductase complex cytochrome b subunit</fullName>
    </alternativeName>
</protein>
<dbReference type="EMBL" id="AJ841956">
    <property type="protein sequence ID" value="CAH56549.1"/>
    <property type="molecule type" value="Genomic_DNA"/>
</dbReference>
<dbReference type="SMR" id="Q5F4G2"/>
<dbReference type="GO" id="GO:0005743">
    <property type="term" value="C:mitochondrial inner membrane"/>
    <property type="evidence" value="ECO:0007669"/>
    <property type="project" value="UniProtKB-SubCell"/>
</dbReference>
<dbReference type="GO" id="GO:0045275">
    <property type="term" value="C:respiratory chain complex III"/>
    <property type="evidence" value="ECO:0007669"/>
    <property type="project" value="InterPro"/>
</dbReference>
<dbReference type="GO" id="GO:0046872">
    <property type="term" value="F:metal ion binding"/>
    <property type="evidence" value="ECO:0007669"/>
    <property type="project" value="UniProtKB-KW"/>
</dbReference>
<dbReference type="GO" id="GO:0008121">
    <property type="term" value="F:ubiquinol-cytochrome-c reductase activity"/>
    <property type="evidence" value="ECO:0007669"/>
    <property type="project" value="InterPro"/>
</dbReference>
<dbReference type="GO" id="GO:0006122">
    <property type="term" value="P:mitochondrial electron transport, ubiquinol to cytochrome c"/>
    <property type="evidence" value="ECO:0007669"/>
    <property type="project" value="TreeGrafter"/>
</dbReference>
<dbReference type="CDD" id="cd00290">
    <property type="entry name" value="cytochrome_b_C"/>
    <property type="match status" value="1"/>
</dbReference>
<dbReference type="CDD" id="cd00284">
    <property type="entry name" value="Cytochrome_b_N"/>
    <property type="match status" value="1"/>
</dbReference>
<dbReference type="FunFam" id="1.20.810.10:FF:000002">
    <property type="entry name" value="Cytochrome b"/>
    <property type="match status" value="1"/>
</dbReference>
<dbReference type="Gene3D" id="1.20.810.10">
    <property type="entry name" value="Cytochrome Bc1 Complex, Chain C"/>
    <property type="match status" value="1"/>
</dbReference>
<dbReference type="InterPro" id="IPR005798">
    <property type="entry name" value="Cyt_b/b6_C"/>
</dbReference>
<dbReference type="InterPro" id="IPR036150">
    <property type="entry name" value="Cyt_b/b6_C_sf"/>
</dbReference>
<dbReference type="InterPro" id="IPR005797">
    <property type="entry name" value="Cyt_b/b6_N"/>
</dbReference>
<dbReference type="InterPro" id="IPR027387">
    <property type="entry name" value="Cytb/b6-like_sf"/>
</dbReference>
<dbReference type="InterPro" id="IPR030689">
    <property type="entry name" value="Cytochrome_b"/>
</dbReference>
<dbReference type="InterPro" id="IPR048260">
    <property type="entry name" value="Cytochrome_b_C_euk/bac"/>
</dbReference>
<dbReference type="InterPro" id="IPR048259">
    <property type="entry name" value="Cytochrome_b_N_euk/bac"/>
</dbReference>
<dbReference type="InterPro" id="IPR016174">
    <property type="entry name" value="Di-haem_cyt_TM"/>
</dbReference>
<dbReference type="PANTHER" id="PTHR19271">
    <property type="entry name" value="CYTOCHROME B"/>
    <property type="match status" value="1"/>
</dbReference>
<dbReference type="PANTHER" id="PTHR19271:SF16">
    <property type="entry name" value="CYTOCHROME B"/>
    <property type="match status" value="1"/>
</dbReference>
<dbReference type="Pfam" id="PF00032">
    <property type="entry name" value="Cytochrom_B_C"/>
    <property type="match status" value="1"/>
</dbReference>
<dbReference type="Pfam" id="PF00033">
    <property type="entry name" value="Cytochrome_B"/>
    <property type="match status" value="1"/>
</dbReference>
<dbReference type="PIRSF" id="PIRSF038885">
    <property type="entry name" value="COB"/>
    <property type="match status" value="1"/>
</dbReference>
<dbReference type="SUPFAM" id="SSF81648">
    <property type="entry name" value="a domain/subunit of cytochrome bc1 complex (Ubiquinol-cytochrome c reductase)"/>
    <property type="match status" value="1"/>
</dbReference>
<dbReference type="SUPFAM" id="SSF81342">
    <property type="entry name" value="Transmembrane di-heme cytochromes"/>
    <property type="match status" value="1"/>
</dbReference>
<dbReference type="PROSITE" id="PS51003">
    <property type="entry name" value="CYTB_CTER"/>
    <property type="match status" value="1"/>
</dbReference>
<dbReference type="PROSITE" id="PS51002">
    <property type="entry name" value="CYTB_NTER"/>
    <property type="match status" value="1"/>
</dbReference>